<gene>
    <name evidence="1" type="primary">rpoC</name>
    <name type="ordered locus">MAG6110</name>
</gene>
<feature type="chain" id="PRO_0000353394" description="DNA-directed RNA polymerase subunit beta'">
    <location>
        <begin position="1"/>
        <end position="1478"/>
    </location>
</feature>
<feature type="binding site" evidence="1">
    <location>
        <position position="535"/>
    </location>
    <ligand>
        <name>Mg(2+)</name>
        <dbReference type="ChEBI" id="CHEBI:18420"/>
    </ligand>
</feature>
<feature type="binding site" evidence="1">
    <location>
        <position position="537"/>
    </location>
    <ligand>
        <name>Mg(2+)</name>
        <dbReference type="ChEBI" id="CHEBI:18420"/>
    </ligand>
</feature>
<feature type="binding site" evidence="1">
    <location>
        <position position="539"/>
    </location>
    <ligand>
        <name>Mg(2+)</name>
        <dbReference type="ChEBI" id="CHEBI:18420"/>
    </ligand>
</feature>
<feature type="binding site" evidence="1">
    <location>
        <position position="1034"/>
    </location>
    <ligand>
        <name>Zn(2+)</name>
        <dbReference type="ChEBI" id="CHEBI:29105"/>
    </ligand>
</feature>
<feature type="binding site" evidence="1">
    <location>
        <position position="1109"/>
    </location>
    <ligand>
        <name>Zn(2+)</name>
        <dbReference type="ChEBI" id="CHEBI:29105"/>
    </ligand>
</feature>
<feature type="binding site" evidence="1">
    <location>
        <position position="1116"/>
    </location>
    <ligand>
        <name>Zn(2+)</name>
        <dbReference type="ChEBI" id="CHEBI:29105"/>
    </ligand>
</feature>
<feature type="binding site" evidence="1">
    <location>
        <position position="1119"/>
    </location>
    <ligand>
        <name>Zn(2+)</name>
        <dbReference type="ChEBI" id="CHEBI:29105"/>
    </ligand>
</feature>
<name>RPOC_MYCAP</name>
<keyword id="KW-0240">DNA-directed RNA polymerase</keyword>
<keyword id="KW-0460">Magnesium</keyword>
<keyword id="KW-0479">Metal-binding</keyword>
<keyword id="KW-0548">Nucleotidyltransferase</keyword>
<keyword id="KW-1185">Reference proteome</keyword>
<keyword id="KW-0804">Transcription</keyword>
<keyword id="KW-0808">Transferase</keyword>
<keyword id="KW-0862">Zinc</keyword>
<reference key="1">
    <citation type="journal article" date="2007" name="PLoS Genet.">
        <title>Being pathogenic, plastic, and sexual while living with a nearly minimal bacterial genome.</title>
        <authorList>
            <person name="Sirand-Pugnet P."/>
            <person name="Lartigue C."/>
            <person name="Marenda M."/>
            <person name="Jacob D."/>
            <person name="Barre A."/>
            <person name="Barbe V."/>
            <person name="Schenowitz C."/>
            <person name="Mangenot S."/>
            <person name="Couloux A."/>
            <person name="Segurens B."/>
            <person name="de Daruvar A."/>
            <person name="Blanchard A."/>
            <person name="Citti C."/>
        </authorList>
    </citation>
    <scope>NUCLEOTIDE SEQUENCE [LARGE SCALE GENOMIC DNA]</scope>
    <source>
        <strain>NCTC 10123 / CIP 59.7 / PG2</strain>
    </source>
</reference>
<comment type="function">
    <text evidence="1">DNA-dependent RNA polymerase catalyzes the transcription of DNA into RNA using the four ribonucleoside triphosphates as substrates.</text>
</comment>
<comment type="catalytic activity">
    <reaction evidence="1">
        <text>RNA(n) + a ribonucleoside 5'-triphosphate = RNA(n+1) + diphosphate</text>
        <dbReference type="Rhea" id="RHEA:21248"/>
        <dbReference type="Rhea" id="RHEA-COMP:14527"/>
        <dbReference type="Rhea" id="RHEA-COMP:17342"/>
        <dbReference type="ChEBI" id="CHEBI:33019"/>
        <dbReference type="ChEBI" id="CHEBI:61557"/>
        <dbReference type="ChEBI" id="CHEBI:140395"/>
        <dbReference type="EC" id="2.7.7.6"/>
    </reaction>
</comment>
<comment type="cofactor">
    <cofactor evidence="1">
        <name>Mg(2+)</name>
        <dbReference type="ChEBI" id="CHEBI:18420"/>
    </cofactor>
    <text evidence="1">Binds 1 Mg(2+) ion per subunit.</text>
</comment>
<comment type="cofactor">
    <cofactor evidence="1">
        <name>Zn(2+)</name>
        <dbReference type="ChEBI" id="CHEBI:29105"/>
    </cofactor>
    <text evidence="2">Binds 1 Zn(2+) ion per subunit; 2 are expected compared to other organisms.</text>
</comment>
<comment type="subunit">
    <text evidence="1">The RNAP catalytic core consists of 2 alpha, 1 beta, 1 beta' and 1 omega subunit. When a sigma factor is associated with the core the holoenzyme is formed, which can initiate transcription.</text>
</comment>
<comment type="similarity">
    <text evidence="1">Belongs to the RNA polymerase beta' chain family.</text>
</comment>
<comment type="caution">
    <text evidence="2">The highly conserved N-terminal zinc-binding site of this subunit is not present in this sequence.</text>
</comment>
<sequence length="1478" mass="167186">MSSFNKKIAKDIKKIKISLAAQDDVKNWSCGEVTKPETINYKSYKPERDGLFDELIFGPTTDFKCPICGTKYKKSDENTICEKTPMCQKYQPVILPKMVRRSRMGHIHLENPVVHFWFFKIDHSIISKLLGLRIANSNKTVSKGDLEKLIYYKSHIVLEDGGLKKLQKNAIIDISDAAIIYADALEELKERFEKDTEEYEIISEALAELESYAVSQTGQDYGIDFYEYNEIIHEFSKAKISTGSKAIEYLLENIDLKAEAEFIESEIEKINQHFDNNPTASIKAQERSKLYKRLAVVNAFIHSGQDPKSMLIYDLPVIPADLRPLVQLDGGRHSTSDVNELYRRIIIRNNRLKKWEETDAPMLIKQNEFRMIQEAVDALIDNSRKKPAPVTSKDNRPLKSISDTLTRKKGRFRQNLLGKRVDYSGRSVIVVGPELKMHQVGVPREMAAKLFEPWIIKELINGDSHINSIKAGKKAIENLDPIIWPYVEKAIEGKVVLLNRAPTLHRLSIQAYEPVLIRGKAIKLHPLSCTPFNADFDGDQMAIHVPISEEAVREARELMLASKNILGPKDGEPIINPAQDIILGLYYLTMEKAAAIDGDKVVGEGKFFATYDEMLLAYENKLVSLHARIALPISEINKKRLNYSPENKYIISTVGKFIFNRAFPESFEFIFGKHVEYVNKTDANGEVKLSEKEVVYTSNNKNQLEQFLLPYGQNFAEVIAKMPLNLPLSKKDVAKIVRRVYDKYVAIVTKSDVASVINQINANEINQIFDLCAELKDFNGKPIDVNHVEILEKIIVEEYKAISQEIIVRERTEEPIWTVNDYTKLLEIVWFKYTNIVANVLDNIKELGYKFSTISGTTISISDVITHQDTKSRIAEGDKYIELLKDYFDQGLMTDDERYNATIAKWAAIKDDIEKDLKKLTKLYPDNSLFMMFNSGARGNSSNFVQLAGMRGLMNNNTKVLKADAENERVVRSTVEIPVKSSFLNGLTAYEFYSSTHGARKGLTDTALNTAKSGYLTRRLVDVAQGITVREDDCGTDYGFQVKDILDTKTNTVIEALYDRIEGRFTNKAIYDKNGKLIVDADELITPEIATEIVENGIKKVEIRSVLSCYTPNGVCKKCYGKDLALNRVVNIGEAVGVIAAQSIGEPGTQLTMRTFHTGGVAGVEDITGGFGRLIELIDAYDSPWGRPAVIANYYGRITDIKRVKEGSESVEYDVITQEYKTRDGKVNTVEYKTRAGRKIRVKINDKVTPGQKIVEGPIVLNNLLRVGDTRLVQNYILKEVQKLYRLQGITISDKYIEIIIRQMLSKILITDSGDSDFFNGSLVDIHVYQKESARLISEGKKPPFGEVKIKGAKQIPLLSDSFLAAASYQETPKILVNASIKAQVDRLKGLKENIILGHKIPAGTNSNFEENGKYDLRNPKSYFADKYDPDIKTVKFVADENEILNMEHRVEIQHIFDEFQSEAFNANVIEFTDDSDN</sequence>
<accession>A5IZ52</accession>
<protein>
    <recommendedName>
        <fullName evidence="1">DNA-directed RNA polymerase subunit beta'</fullName>
        <shortName evidence="1">RNAP subunit beta'</shortName>
        <ecNumber evidence="1">2.7.7.6</ecNumber>
    </recommendedName>
    <alternativeName>
        <fullName evidence="1">RNA polymerase subunit beta'</fullName>
    </alternativeName>
    <alternativeName>
        <fullName evidence="1">Transcriptase subunit beta'</fullName>
    </alternativeName>
</protein>
<organism>
    <name type="scientific">Mycoplasmopsis agalactiae (strain NCTC 10123 / CIP 59.7 / PG2)</name>
    <name type="common">Mycoplasma agalactiae</name>
    <dbReference type="NCBI Taxonomy" id="347257"/>
    <lineage>
        <taxon>Bacteria</taxon>
        <taxon>Bacillati</taxon>
        <taxon>Mycoplasmatota</taxon>
        <taxon>Mycoplasmoidales</taxon>
        <taxon>Metamycoplasmataceae</taxon>
        <taxon>Mycoplasmopsis</taxon>
    </lineage>
</organism>
<evidence type="ECO:0000255" key="1">
    <source>
        <dbReference type="HAMAP-Rule" id="MF_01322"/>
    </source>
</evidence>
<evidence type="ECO:0000305" key="2"/>
<dbReference type="EC" id="2.7.7.6" evidence="1"/>
<dbReference type="EMBL" id="CU179680">
    <property type="protein sequence ID" value="CAL59311.1"/>
    <property type="molecule type" value="Genomic_DNA"/>
</dbReference>
<dbReference type="RefSeq" id="WP_011949768.1">
    <property type="nucleotide sequence ID" value="NC_009497.1"/>
</dbReference>
<dbReference type="SMR" id="A5IZ52"/>
<dbReference type="STRING" id="347257.MAG6110"/>
<dbReference type="GeneID" id="93358346"/>
<dbReference type="KEGG" id="maa:MAG6110"/>
<dbReference type="HOGENOM" id="CLU_000524_3_1_14"/>
<dbReference type="Proteomes" id="UP000007065">
    <property type="component" value="Chromosome"/>
</dbReference>
<dbReference type="GO" id="GO:0000428">
    <property type="term" value="C:DNA-directed RNA polymerase complex"/>
    <property type="evidence" value="ECO:0007669"/>
    <property type="project" value="UniProtKB-KW"/>
</dbReference>
<dbReference type="GO" id="GO:0003677">
    <property type="term" value="F:DNA binding"/>
    <property type="evidence" value="ECO:0007669"/>
    <property type="project" value="UniProtKB-UniRule"/>
</dbReference>
<dbReference type="GO" id="GO:0003899">
    <property type="term" value="F:DNA-directed RNA polymerase activity"/>
    <property type="evidence" value="ECO:0007669"/>
    <property type="project" value="UniProtKB-UniRule"/>
</dbReference>
<dbReference type="GO" id="GO:0000287">
    <property type="term" value="F:magnesium ion binding"/>
    <property type="evidence" value="ECO:0007669"/>
    <property type="project" value="UniProtKB-UniRule"/>
</dbReference>
<dbReference type="GO" id="GO:0008270">
    <property type="term" value="F:zinc ion binding"/>
    <property type="evidence" value="ECO:0007669"/>
    <property type="project" value="UniProtKB-UniRule"/>
</dbReference>
<dbReference type="GO" id="GO:0006351">
    <property type="term" value="P:DNA-templated transcription"/>
    <property type="evidence" value="ECO:0007669"/>
    <property type="project" value="UniProtKB-UniRule"/>
</dbReference>
<dbReference type="CDD" id="cd02655">
    <property type="entry name" value="RNAP_beta'_C"/>
    <property type="match status" value="1"/>
</dbReference>
<dbReference type="Gene3D" id="1.10.132.30">
    <property type="match status" value="1"/>
</dbReference>
<dbReference type="Gene3D" id="1.10.150.390">
    <property type="match status" value="1"/>
</dbReference>
<dbReference type="Gene3D" id="1.10.1790.20">
    <property type="match status" value="1"/>
</dbReference>
<dbReference type="Gene3D" id="1.10.40.90">
    <property type="match status" value="1"/>
</dbReference>
<dbReference type="Gene3D" id="2.40.40.20">
    <property type="match status" value="1"/>
</dbReference>
<dbReference type="Gene3D" id="2.40.50.100">
    <property type="match status" value="1"/>
</dbReference>
<dbReference type="Gene3D" id="4.10.860.120">
    <property type="entry name" value="RNA polymerase II, clamp domain"/>
    <property type="match status" value="1"/>
</dbReference>
<dbReference type="Gene3D" id="1.10.274.100">
    <property type="entry name" value="RNA polymerase Rpb1, domain 3"/>
    <property type="match status" value="2"/>
</dbReference>
<dbReference type="HAMAP" id="MF_01322">
    <property type="entry name" value="RNApol_bact_RpoC"/>
    <property type="match status" value="1"/>
</dbReference>
<dbReference type="InterPro" id="IPR045867">
    <property type="entry name" value="DNA-dir_RpoC_beta_prime"/>
</dbReference>
<dbReference type="InterPro" id="IPR012754">
    <property type="entry name" value="DNA-dir_RpoC_beta_prime_bact"/>
</dbReference>
<dbReference type="InterPro" id="IPR000722">
    <property type="entry name" value="RNA_pol_asu"/>
</dbReference>
<dbReference type="InterPro" id="IPR006592">
    <property type="entry name" value="RNA_pol_N"/>
</dbReference>
<dbReference type="InterPro" id="IPR007080">
    <property type="entry name" value="RNA_pol_Rpb1_1"/>
</dbReference>
<dbReference type="InterPro" id="IPR007066">
    <property type="entry name" value="RNA_pol_Rpb1_3"/>
</dbReference>
<dbReference type="InterPro" id="IPR042102">
    <property type="entry name" value="RNA_pol_Rpb1_3_sf"/>
</dbReference>
<dbReference type="InterPro" id="IPR007083">
    <property type="entry name" value="RNA_pol_Rpb1_4"/>
</dbReference>
<dbReference type="InterPro" id="IPR007081">
    <property type="entry name" value="RNA_pol_Rpb1_5"/>
</dbReference>
<dbReference type="InterPro" id="IPR044893">
    <property type="entry name" value="RNA_pol_Rpb1_clamp_domain"/>
</dbReference>
<dbReference type="InterPro" id="IPR038120">
    <property type="entry name" value="Rpb1_funnel_sf"/>
</dbReference>
<dbReference type="PANTHER" id="PTHR19376">
    <property type="entry name" value="DNA-DIRECTED RNA POLYMERASE"/>
    <property type="match status" value="1"/>
</dbReference>
<dbReference type="PANTHER" id="PTHR19376:SF54">
    <property type="entry name" value="DNA-DIRECTED RNA POLYMERASE SUBUNIT BETA"/>
    <property type="match status" value="1"/>
</dbReference>
<dbReference type="Pfam" id="PF04997">
    <property type="entry name" value="RNA_pol_Rpb1_1"/>
    <property type="match status" value="1"/>
</dbReference>
<dbReference type="Pfam" id="PF00623">
    <property type="entry name" value="RNA_pol_Rpb1_2"/>
    <property type="match status" value="1"/>
</dbReference>
<dbReference type="Pfam" id="PF04983">
    <property type="entry name" value="RNA_pol_Rpb1_3"/>
    <property type="match status" value="1"/>
</dbReference>
<dbReference type="Pfam" id="PF05000">
    <property type="entry name" value="RNA_pol_Rpb1_4"/>
    <property type="match status" value="1"/>
</dbReference>
<dbReference type="Pfam" id="PF04998">
    <property type="entry name" value="RNA_pol_Rpb1_5"/>
    <property type="match status" value="1"/>
</dbReference>
<dbReference type="SMART" id="SM00663">
    <property type="entry name" value="RPOLA_N"/>
    <property type="match status" value="1"/>
</dbReference>
<dbReference type="SUPFAM" id="SSF64484">
    <property type="entry name" value="beta and beta-prime subunits of DNA dependent RNA-polymerase"/>
    <property type="match status" value="1"/>
</dbReference>
<proteinExistence type="inferred from homology"/>